<keyword id="KW-0067">ATP-binding</keyword>
<keyword id="KW-0315">Glutamine amidotransferase</keyword>
<keyword id="KW-0332">GMP biosynthesis</keyword>
<keyword id="KW-0436">Ligase</keyword>
<keyword id="KW-0547">Nucleotide-binding</keyword>
<keyword id="KW-0658">Purine biosynthesis</keyword>
<sequence>MTNIHHHKILILDFGSQYTQLIARRVREIGVYCELWAWDVTEEQIREFNPTGIILSGGPESTTEANSPRAPEYVFNAGVPVLGICYGMQTMAMQLGGLTETSTHREFGYAEVSLRNPTALFDHLNDDATTSQTTLDVWMSHGDKVTRLPDNFQITGMTSTCPIAAMSDESRRFYGVQFHPEVTHTKCGQKLLQNFVVDICGCETNWTAENIIEDAVARIKAQVGGDEVILGLSGGVDSSVTALLLHRAIGKNLHCVFVDNGLLRLNEGDQVMEMFGDKFGLNIIRVEAEDRFLEALKGIDEPEAKRKTIGKVFVDVFDDEAKKLTDVKWLAQGTIYPDVIESAASKTGKAHVIKSHHNVGGLPDYMKLGLVEPLRELFKDEVRKIGLALGLPAEMLNRHPFPGPGLGVRVLGEIKKEYCDLLRKADAIFIEELHKADWYYKVSQAFSVFLPVKSVGVMGDGRKYDWVISLRAVETIDFMTAHWANLPYDLLGKISNRIINEVNSISRVVYDISGKPPATIEWE</sequence>
<name>GUAA_HISS1</name>
<evidence type="ECO:0000255" key="1">
    <source>
        <dbReference type="HAMAP-Rule" id="MF_00344"/>
    </source>
</evidence>
<gene>
    <name evidence="1" type="primary">guaA</name>
    <name type="ordered locus">HS_0421</name>
</gene>
<accession>Q0I2D2</accession>
<organism>
    <name type="scientific">Histophilus somni (strain 129Pt)</name>
    <name type="common">Haemophilus somnus</name>
    <dbReference type="NCBI Taxonomy" id="205914"/>
    <lineage>
        <taxon>Bacteria</taxon>
        <taxon>Pseudomonadati</taxon>
        <taxon>Pseudomonadota</taxon>
        <taxon>Gammaproteobacteria</taxon>
        <taxon>Pasteurellales</taxon>
        <taxon>Pasteurellaceae</taxon>
        <taxon>Histophilus</taxon>
    </lineage>
</organism>
<dbReference type="EC" id="6.3.5.2" evidence="1"/>
<dbReference type="EMBL" id="CP000436">
    <property type="protein sequence ID" value="ABI24699.1"/>
    <property type="molecule type" value="Genomic_DNA"/>
</dbReference>
<dbReference type="SMR" id="Q0I2D2"/>
<dbReference type="KEGG" id="hso:HS_0421"/>
<dbReference type="eggNOG" id="COG0518">
    <property type="taxonomic scope" value="Bacteria"/>
</dbReference>
<dbReference type="eggNOG" id="COG0519">
    <property type="taxonomic scope" value="Bacteria"/>
</dbReference>
<dbReference type="HOGENOM" id="CLU_014340_0_5_6"/>
<dbReference type="UniPathway" id="UPA00189">
    <property type="reaction ID" value="UER00296"/>
</dbReference>
<dbReference type="GO" id="GO:0005829">
    <property type="term" value="C:cytosol"/>
    <property type="evidence" value="ECO:0007669"/>
    <property type="project" value="TreeGrafter"/>
</dbReference>
<dbReference type="GO" id="GO:0005524">
    <property type="term" value="F:ATP binding"/>
    <property type="evidence" value="ECO:0007669"/>
    <property type="project" value="UniProtKB-UniRule"/>
</dbReference>
<dbReference type="GO" id="GO:0003921">
    <property type="term" value="F:GMP synthase activity"/>
    <property type="evidence" value="ECO:0007669"/>
    <property type="project" value="InterPro"/>
</dbReference>
<dbReference type="CDD" id="cd01742">
    <property type="entry name" value="GATase1_GMP_Synthase"/>
    <property type="match status" value="1"/>
</dbReference>
<dbReference type="CDD" id="cd01997">
    <property type="entry name" value="GMP_synthase_C"/>
    <property type="match status" value="1"/>
</dbReference>
<dbReference type="FunFam" id="3.30.300.10:FF:000002">
    <property type="entry name" value="GMP synthase [glutamine-hydrolyzing]"/>
    <property type="match status" value="1"/>
</dbReference>
<dbReference type="FunFam" id="3.40.50.620:FF:000001">
    <property type="entry name" value="GMP synthase [glutamine-hydrolyzing]"/>
    <property type="match status" value="1"/>
</dbReference>
<dbReference type="FunFam" id="3.40.50.880:FF:000001">
    <property type="entry name" value="GMP synthase [glutamine-hydrolyzing]"/>
    <property type="match status" value="1"/>
</dbReference>
<dbReference type="Gene3D" id="3.30.300.10">
    <property type="match status" value="1"/>
</dbReference>
<dbReference type="Gene3D" id="3.40.50.880">
    <property type="match status" value="1"/>
</dbReference>
<dbReference type="Gene3D" id="3.40.50.620">
    <property type="entry name" value="HUPs"/>
    <property type="match status" value="1"/>
</dbReference>
<dbReference type="HAMAP" id="MF_00344">
    <property type="entry name" value="GMP_synthase"/>
    <property type="match status" value="1"/>
</dbReference>
<dbReference type="InterPro" id="IPR029062">
    <property type="entry name" value="Class_I_gatase-like"/>
</dbReference>
<dbReference type="InterPro" id="IPR017926">
    <property type="entry name" value="GATASE"/>
</dbReference>
<dbReference type="InterPro" id="IPR001674">
    <property type="entry name" value="GMP_synth_C"/>
</dbReference>
<dbReference type="InterPro" id="IPR004739">
    <property type="entry name" value="GMP_synth_GATase"/>
</dbReference>
<dbReference type="InterPro" id="IPR022955">
    <property type="entry name" value="GMP_synthase"/>
</dbReference>
<dbReference type="InterPro" id="IPR025777">
    <property type="entry name" value="GMPS_ATP_PPase_dom"/>
</dbReference>
<dbReference type="InterPro" id="IPR022310">
    <property type="entry name" value="NAD/GMP_synthase"/>
</dbReference>
<dbReference type="InterPro" id="IPR014729">
    <property type="entry name" value="Rossmann-like_a/b/a_fold"/>
</dbReference>
<dbReference type="NCBIfam" id="TIGR00884">
    <property type="entry name" value="guaA_Cterm"/>
    <property type="match status" value="1"/>
</dbReference>
<dbReference type="NCBIfam" id="TIGR00888">
    <property type="entry name" value="guaA_Nterm"/>
    <property type="match status" value="1"/>
</dbReference>
<dbReference type="NCBIfam" id="NF000848">
    <property type="entry name" value="PRK00074.1"/>
    <property type="match status" value="1"/>
</dbReference>
<dbReference type="PANTHER" id="PTHR11922:SF2">
    <property type="entry name" value="GMP SYNTHASE [GLUTAMINE-HYDROLYZING]"/>
    <property type="match status" value="1"/>
</dbReference>
<dbReference type="PANTHER" id="PTHR11922">
    <property type="entry name" value="GMP SYNTHASE-RELATED"/>
    <property type="match status" value="1"/>
</dbReference>
<dbReference type="Pfam" id="PF00117">
    <property type="entry name" value="GATase"/>
    <property type="match status" value="1"/>
</dbReference>
<dbReference type="Pfam" id="PF00958">
    <property type="entry name" value="GMP_synt_C"/>
    <property type="match status" value="1"/>
</dbReference>
<dbReference type="Pfam" id="PF02540">
    <property type="entry name" value="NAD_synthase"/>
    <property type="match status" value="1"/>
</dbReference>
<dbReference type="PRINTS" id="PR00097">
    <property type="entry name" value="ANTSNTHASEII"/>
</dbReference>
<dbReference type="PRINTS" id="PR00099">
    <property type="entry name" value="CPSGATASE"/>
</dbReference>
<dbReference type="PRINTS" id="PR00096">
    <property type="entry name" value="GATASE"/>
</dbReference>
<dbReference type="SUPFAM" id="SSF52402">
    <property type="entry name" value="Adenine nucleotide alpha hydrolases-like"/>
    <property type="match status" value="1"/>
</dbReference>
<dbReference type="SUPFAM" id="SSF52317">
    <property type="entry name" value="Class I glutamine amidotransferase-like"/>
    <property type="match status" value="1"/>
</dbReference>
<dbReference type="SUPFAM" id="SSF54810">
    <property type="entry name" value="GMP synthetase C-terminal dimerisation domain"/>
    <property type="match status" value="1"/>
</dbReference>
<dbReference type="PROSITE" id="PS51273">
    <property type="entry name" value="GATASE_TYPE_1"/>
    <property type="match status" value="1"/>
</dbReference>
<dbReference type="PROSITE" id="PS51553">
    <property type="entry name" value="GMPS_ATP_PPASE"/>
    <property type="match status" value="1"/>
</dbReference>
<protein>
    <recommendedName>
        <fullName evidence="1">GMP synthase [glutamine-hydrolyzing]</fullName>
        <ecNumber evidence="1">6.3.5.2</ecNumber>
    </recommendedName>
    <alternativeName>
        <fullName evidence="1">GMP synthetase</fullName>
    </alternativeName>
    <alternativeName>
        <fullName evidence="1">Glutamine amidotransferase</fullName>
    </alternativeName>
</protein>
<reference key="1">
    <citation type="journal article" date="2007" name="J. Bacteriol.">
        <title>Complete genome sequence of Haemophilus somnus (Histophilus somni) strain 129Pt and comparison to Haemophilus ducreyi 35000HP and Haemophilus influenzae Rd.</title>
        <authorList>
            <person name="Challacombe J.F."/>
            <person name="Duncan A.J."/>
            <person name="Brettin T.S."/>
            <person name="Bruce D."/>
            <person name="Chertkov O."/>
            <person name="Detter J.C."/>
            <person name="Han C.S."/>
            <person name="Misra M."/>
            <person name="Richardson P."/>
            <person name="Tapia R."/>
            <person name="Thayer N."/>
            <person name="Xie G."/>
            <person name="Inzana T.J."/>
        </authorList>
    </citation>
    <scope>NUCLEOTIDE SEQUENCE [LARGE SCALE GENOMIC DNA]</scope>
    <source>
        <strain>129Pt</strain>
    </source>
</reference>
<feature type="chain" id="PRO_1000120311" description="GMP synthase [glutamine-hydrolyzing]">
    <location>
        <begin position="1"/>
        <end position="523"/>
    </location>
</feature>
<feature type="domain" description="Glutamine amidotransferase type-1" evidence="1">
    <location>
        <begin position="8"/>
        <end position="205"/>
    </location>
</feature>
<feature type="domain" description="GMPS ATP-PPase" evidence="1">
    <location>
        <begin position="206"/>
        <end position="398"/>
    </location>
</feature>
<feature type="active site" description="Nucleophile" evidence="1">
    <location>
        <position position="85"/>
    </location>
</feature>
<feature type="active site" evidence="1">
    <location>
        <position position="179"/>
    </location>
</feature>
<feature type="active site" evidence="1">
    <location>
        <position position="181"/>
    </location>
</feature>
<feature type="binding site" evidence="1">
    <location>
        <begin position="233"/>
        <end position="239"/>
    </location>
    <ligand>
        <name>ATP</name>
        <dbReference type="ChEBI" id="CHEBI:30616"/>
    </ligand>
</feature>
<comment type="function">
    <text evidence="1">Catalyzes the synthesis of GMP from XMP.</text>
</comment>
<comment type="catalytic activity">
    <reaction evidence="1">
        <text>XMP + L-glutamine + ATP + H2O = GMP + L-glutamate + AMP + diphosphate + 2 H(+)</text>
        <dbReference type="Rhea" id="RHEA:11680"/>
        <dbReference type="ChEBI" id="CHEBI:15377"/>
        <dbReference type="ChEBI" id="CHEBI:15378"/>
        <dbReference type="ChEBI" id="CHEBI:29985"/>
        <dbReference type="ChEBI" id="CHEBI:30616"/>
        <dbReference type="ChEBI" id="CHEBI:33019"/>
        <dbReference type="ChEBI" id="CHEBI:57464"/>
        <dbReference type="ChEBI" id="CHEBI:58115"/>
        <dbReference type="ChEBI" id="CHEBI:58359"/>
        <dbReference type="ChEBI" id="CHEBI:456215"/>
        <dbReference type="EC" id="6.3.5.2"/>
    </reaction>
</comment>
<comment type="pathway">
    <text evidence="1">Purine metabolism; GMP biosynthesis; GMP from XMP (L-Gln route): step 1/1.</text>
</comment>
<comment type="subunit">
    <text evidence="1">Homodimer.</text>
</comment>
<proteinExistence type="inferred from homology"/>